<comment type="function">
    <text evidence="2">Cell wall formation.</text>
</comment>
<comment type="catalytic activity">
    <reaction evidence="2">
        <text>2 D-alanine + ATP = D-alanyl-D-alanine + ADP + phosphate + H(+)</text>
        <dbReference type="Rhea" id="RHEA:11224"/>
        <dbReference type="ChEBI" id="CHEBI:15378"/>
        <dbReference type="ChEBI" id="CHEBI:30616"/>
        <dbReference type="ChEBI" id="CHEBI:43474"/>
        <dbReference type="ChEBI" id="CHEBI:57416"/>
        <dbReference type="ChEBI" id="CHEBI:57822"/>
        <dbReference type="ChEBI" id="CHEBI:456216"/>
        <dbReference type="EC" id="6.3.2.4"/>
    </reaction>
</comment>
<comment type="cofactor">
    <cofactor evidence="1">
        <name>Mg(2+)</name>
        <dbReference type="ChEBI" id="CHEBI:18420"/>
    </cofactor>
    <cofactor evidence="1">
        <name>Mn(2+)</name>
        <dbReference type="ChEBI" id="CHEBI:29035"/>
    </cofactor>
    <text evidence="1">Binds 2 magnesium or manganese ions per subunit.</text>
</comment>
<comment type="pathway">
    <text evidence="2">Cell wall biogenesis; peptidoglycan biosynthesis.</text>
</comment>
<comment type="subcellular location">
    <subcellularLocation>
        <location evidence="2">Cytoplasm</location>
    </subcellularLocation>
</comment>
<comment type="similarity">
    <text evidence="2">Belongs to the D-alanine--D-alanine ligase family.</text>
</comment>
<dbReference type="EC" id="6.3.2.4" evidence="2"/>
<dbReference type="EMBL" id="AM286280">
    <property type="protein sequence ID" value="CAL08201.1"/>
    <property type="molecule type" value="Genomic_DNA"/>
</dbReference>
<dbReference type="RefSeq" id="WP_003027426.1">
    <property type="nucleotide sequence ID" value="NC_008245.1"/>
</dbReference>
<dbReference type="SMR" id="Q14JP9"/>
<dbReference type="KEGG" id="ftf:FTF0185"/>
<dbReference type="HOGENOM" id="CLU_039268_1_1_6"/>
<dbReference type="UniPathway" id="UPA00219"/>
<dbReference type="GO" id="GO:0005737">
    <property type="term" value="C:cytoplasm"/>
    <property type="evidence" value="ECO:0007669"/>
    <property type="project" value="UniProtKB-SubCell"/>
</dbReference>
<dbReference type="GO" id="GO:0005524">
    <property type="term" value="F:ATP binding"/>
    <property type="evidence" value="ECO:0007669"/>
    <property type="project" value="UniProtKB-KW"/>
</dbReference>
<dbReference type="GO" id="GO:0008716">
    <property type="term" value="F:D-alanine-D-alanine ligase activity"/>
    <property type="evidence" value="ECO:0007669"/>
    <property type="project" value="UniProtKB-UniRule"/>
</dbReference>
<dbReference type="GO" id="GO:0046872">
    <property type="term" value="F:metal ion binding"/>
    <property type="evidence" value="ECO:0007669"/>
    <property type="project" value="UniProtKB-KW"/>
</dbReference>
<dbReference type="GO" id="GO:0071555">
    <property type="term" value="P:cell wall organization"/>
    <property type="evidence" value="ECO:0007669"/>
    <property type="project" value="UniProtKB-KW"/>
</dbReference>
<dbReference type="GO" id="GO:0009252">
    <property type="term" value="P:peptidoglycan biosynthetic process"/>
    <property type="evidence" value="ECO:0007669"/>
    <property type="project" value="UniProtKB-UniRule"/>
</dbReference>
<dbReference type="GO" id="GO:0008360">
    <property type="term" value="P:regulation of cell shape"/>
    <property type="evidence" value="ECO:0007669"/>
    <property type="project" value="UniProtKB-KW"/>
</dbReference>
<dbReference type="Gene3D" id="3.40.50.20">
    <property type="match status" value="1"/>
</dbReference>
<dbReference type="Gene3D" id="3.30.1490.20">
    <property type="entry name" value="ATP-grasp fold, A domain"/>
    <property type="match status" value="1"/>
</dbReference>
<dbReference type="Gene3D" id="3.30.470.20">
    <property type="entry name" value="ATP-grasp fold, B domain"/>
    <property type="match status" value="1"/>
</dbReference>
<dbReference type="HAMAP" id="MF_00047">
    <property type="entry name" value="Dala_Dala_lig"/>
    <property type="match status" value="1"/>
</dbReference>
<dbReference type="InterPro" id="IPR011761">
    <property type="entry name" value="ATP-grasp"/>
</dbReference>
<dbReference type="InterPro" id="IPR013815">
    <property type="entry name" value="ATP_grasp_subdomain_1"/>
</dbReference>
<dbReference type="InterPro" id="IPR000291">
    <property type="entry name" value="D-Ala_lig_Van_CS"/>
</dbReference>
<dbReference type="InterPro" id="IPR005905">
    <property type="entry name" value="D_ala_D_ala"/>
</dbReference>
<dbReference type="InterPro" id="IPR011095">
    <property type="entry name" value="Dala_Dala_lig_C"/>
</dbReference>
<dbReference type="InterPro" id="IPR016185">
    <property type="entry name" value="PreATP-grasp_dom_sf"/>
</dbReference>
<dbReference type="NCBIfam" id="TIGR01205">
    <property type="entry name" value="D_ala_D_alaTIGR"/>
    <property type="match status" value="1"/>
</dbReference>
<dbReference type="NCBIfam" id="NF002378">
    <property type="entry name" value="PRK01372.1"/>
    <property type="match status" value="1"/>
</dbReference>
<dbReference type="NCBIfam" id="NF011167">
    <property type="entry name" value="PRK14569.1"/>
    <property type="match status" value="1"/>
</dbReference>
<dbReference type="PANTHER" id="PTHR23132">
    <property type="entry name" value="D-ALANINE--D-ALANINE LIGASE"/>
    <property type="match status" value="1"/>
</dbReference>
<dbReference type="PANTHER" id="PTHR23132:SF23">
    <property type="entry name" value="D-ALANINE--D-ALANINE LIGASE B"/>
    <property type="match status" value="1"/>
</dbReference>
<dbReference type="Pfam" id="PF07478">
    <property type="entry name" value="Dala_Dala_lig_C"/>
    <property type="match status" value="1"/>
</dbReference>
<dbReference type="PIRSF" id="PIRSF039102">
    <property type="entry name" value="Ddl/VanB"/>
    <property type="match status" value="1"/>
</dbReference>
<dbReference type="SUPFAM" id="SSF56059">
    <property type="entry name" value="Glutathione synthetase ATP-binding domain-like"/>
    <property type="match status" value="1"/>
</dbReference>
<dbReference type="SUPFAM" id="SSF52440">
    <property type="entry name" value="PreATP-grasp domain"/>
    <property type="match status" value="1"/>
</dbReference>
<dbReference type="PROSITE" id="PS50975">
    <property type="entry name" value="ATP_GRASP"/>
    <property type="match status" value="1"/>
</dbReference>
<dbReference type="PROSITE" id="PS00843">
    <property type="entry name" value="DALA_DALA_LIGASE_1"/>
    <property type="match status" value="1"/>
</dbReference>
<dbReference type="PROSITE" id="PS00844">
    <property type="entry name" value="DALA_DALA_LIGASE_2"/>
    <property type="match status" value="1"/>
</dbReference>
<name>DDL_FRAT1</name>
<gene>
    <name evidence="2" type="primary">ddl</name>
    <name type="ordered locus">FTF0185</name>
</gene>
<reference key="1">
    <citation type="journal article" date="2007" name="PLoS ONE">
        <title>Genome sequencing shows that European isolates of Francisella tularensis subspecies tularensis are almost identical to US laboratory strain Schu S4.</title>
        <authorList>
            <person name="Chaudhuri R.R."/>
            <person name="Ren C.-P."/>
            <person name="Desmond L."/>
            <person name="Vincent G.A."/>
            <person name="Silman N.J."/>
            <person name="Brehm J.K."/>
            <person name="Elmore M.J."/>
            <person name="Hudson M.J."/>
            <person name="Forsman M."/>
            <person name="Isherwood K.E."/>
            <person name="Gurycova D."/>
            <person name="Minton N.P."/>
            <person name="Titball R.W."/>
            <person name="Pallen M.J."/>
            <person name="Vipond R."/>
        </authorList>
    </citation>
    <scope>NUCLEOTIDE SEQUENCE [LARGE SCALE GENOMIC DNA]</scope>
    <source>
        <strain>FSC 198</strain>
    </source>
</reference>
<protein>
    <recommendedName>
        <fullName evidence="2">D-alanine--D-alanine ligase</fullName>
        <ecNumber evidence="2">6.3.2.4</ecNumber>
    </recommendedName>
    <alternativeName>
        <fullName evidence="2">D-Ala-D-Ala ligase</fullName>
    </alternativeName>
    <alternativeName>
        <fullName evidence="2">D-alanylalanine synthetase</fullName>
    </alternativeName>
</protein>
<proteinExistence type="inferred from homology"/>
<sequence>MKNEKIVVLYGGDSPEREVSLKSGKAVLDSLISQGYDAVGVDASGKELVAKLLELKPDKCFVALHGEDGENGRVSALLEMLEIKHTSSSMKSSVITMDKMISKEILMHHRMPTPMAKFLTDKLVAEDEISFPVAVKPSSGGSSIATFKVKSIQELKHAYEEASKYGEVMIEQWVTGKEITVAIVNDEVYSSVWIEPQNEFYDYESKYSGKSIYHSPSGLCEQKELEVRQLAKKAYDLLGCSGHARVDFIYDDRGNFYIMEINSSPGMTDNSLSPKSAAAEGVDFDSFVKRIIEQAQ</sequence>
<keyword id="KW-0067">ATP-binding</keyword>
<keyword id="KW-0133">Cell shape</keyword>
<keyword id="KW-0961">Cell wall biogenesis/degradation</keyword>
<keyword id="KW-0963">Cytoplasm</keyword>
<keyword id="KW-0436">Ligase</keyword>
<keyword id="KW-0460">Magnesium</keyword>
<keyword id="KW-0464">Manganese</keyword>
<keyword id="KW-0479">Metal-binding</keyword>
<keyword id="KW-0547">Nucleotide-binding</keyword>
<keyword id="KW-0573">Peptidoglycan synthesis</keyword>
<evidence type="ECO:0000250" key="1"/>
<evidence type="ECO:0000255" key="2">
    <source>
        <dbReference type="HAMAP-Rule" id="MF_00047"/>
    </source>
</evidence>
<accession>Q14JP9</accession>
<feature type="chain" id="PRO_0000341099" description="D-alanine--D-alanine ligase">
    <location>
        <begin position="1"/>
        <end position="296"/>
    </location>
</feature>
<feature type="domain" description="ATP-grasp" evidence="2">
    <location>
        <begin position="103"/>
        <end position="293"/>
    </location>
</feature>
<feature type="binding site" evidence="2">
    <location>
        <begin position="129"/>
        <end position="180"/>
    </location>
    <ligand>
        <name>ATP</name>
        <dbReference type="ChEBI" id="CHEBI:30616"/>
    </ligand>
</feature>
<feature type="binding site" evidence="2">
    <location>
        <position position="247"/>
    </location>
    <ligand>
        <name>Mg(2+)</name>
        <dbReference type="ChEBI" id="CHEBI:18420"/>
        <label>1</label>
    </ligand>
</feature>
<feature type="binding site" evidence="2">
    <location>
        <position position="260"/>
    </location>
    <ligand>
        <name>Mg(2+)</name>
        <dbReference type="ChEBI" id="CHEBI:18420"/>
        <label>1</label>
    </ligand>
</feature>
<feature type="binding site" evidence="2">
    <location>
        <position position="260"/>
    </location>
    <ligand>
        <name>Mg(2+)</name>
        <dbReference type="ChEBI" id="CHEBI:18420"/>
        <label>2</label>
    </ligand>
</feature>
<feature type="binding site" evidence="2">
    <location>
        <position position="262"/>
    </location>
    <ligand>
        <name>Mg(2+)</name>
        <dbReference type="ChEBI" id="CHEBI:18420"/>
        <label>2</label>
    </ligand>
</feature>
<organism>
    <name type="scientific">Francisella tularensis subsp. tularensis (strain FSC 198)</name>
    <dbReference type="NCBI Taxonomy" id="393115"/>
    <lineage>
        <taxon>Bacteria</taxon>
        <taxon>Pseudomonadati</taxon>
        <taxon>Pseudomonadota</taxon>
        <taxon>Gammaproteobacteria</taxon>
        <taxon>Thiotrichales</taxon>
        <taxon>Francisellaceae</taxon>
        <taxon>Francisella</taxon>
    </lineage>
</organism>